<reference key="1">
    <citation type="journal article" date="1998" name="Nature">
        <title>Deciphering the biology of Mycobacterium tuberculosis from the complete genome sequence.</title>
        <authorList>
            <person name="Cole S.T."/>
            <person name="Brosch R."/>
            <person name="Parkhill J."/>
            <person name="Garnier T."/>
            <person name="Churcher C.M."/>
            <person name="Harris D.E."/>
            <person name="Gordon S.V."/>
            <person name="Eiglmeier K."/>
            <person name="Gas S."/>
            <person name="Barry C.E. III"/>
            <person name="Tekaia F."/>
            <person name="Badcock K."/>
            <person name="Basham D."/>
            <person name="Brown D."/>
            <person name="Chillingworth T."/>
            <person name="Connor R."/>
            <person name="Davies R.M."/>
            <person name="Devlin K."/>
            <person name="Feltwell T."/>
            <person name="Gentles S."/>
            <person name="Hamlin N."/>
            <person name="Holroyd S."/>
            <person name="Hornsby T."/>
            <person name="Jagels K."/>
            <person name="Krogh A."/>
            <person name="McLean J."/>
            <person name="Moule S."/>
            <person name="Murphy L.D."/>
            <person name="Oliver S."/>
            <person name="Osborne J."/>
            <person name="Quail M.A."/>
            <person name="Rajandream M.A."/>
            <person name="Rogers J."/>
            <person name="Rutter S."/>
            <person name="Seeger K."/>
            <person name="Skelton S."/>
            <person name="Squares S."/>
            <person name="Squares R."/>
            <person name="Sulston J.E."/>
            <person name="Taylor K."/>
            <person name="Whitehead S."/>
            <person name="Barrell B.G."/>
        </authorList>
    </citation>
    <scope>NUCLEOTIDE SEQUENCE [LARGE SCALE GENOMIC DNA]</scope>
    <source>
        <strain>ATCC 25618 / H37Rv</strain>
    </source>
</reference>
<reference key="2">
    <citation type="journal article" date="2011" name="Mol. Cell. Proteomics">
        <title>Proteogenomic analysis of Mycobacterium tuberculosis by high resolution mass spectrometry.</title>
        <authorList>
            <person name="Kelkar D.S."/>
            <person name="Kumar D."/>
            <person name="Kumar P."/>
            <person name="Balakrishnan L."/>
            <person name="Muthusamy B."/>
            <person name="Yadav A.K."/>
            <person name="Shrivastava P."/>
            <person name="Marimuthu A."/>
            <person name="Anand S."/>
            <person name="Sundaram H."/>
            <person name="Kingsbury R."/>
            <person name="Harsha H.C."/>
            <person name="Nair B."/>
            <person name="Prasad T.S."/>
            <person name="Chauhan D.S."/>
            <person name="Katoch K."/>
            <person name="Katoch V.M."/>
            <person name="Kumar P."/>
            <person name="Chaerkady R."/>
            <person name="Ramachandran S."/>
            <person name="Dash D."/>
            <person name="Pandey A."/>
        </authorList>
    </citation>
    <scope>ACETYLATION [LARGE SCALE ANALYSIS] AT SER-2</scope>
    <scope>CLEAVAGE OF INITIATOR METHIONINE [LARGE SCALE ANALYSIS]</scope>
    <scope>IDENTIFICATION BY MASS SPECTROMETRY [LARGE SCALE ANALYSIS]</scope>
    <source>
        <strain>ATCC 25618 / H37Rv</strain>
    </source>
</reference>
<evidence type="ECO:0000255" key="1">
    <source>
        <dbReference type="HAMAP-Rule" id="MF_00272"/>
    </source>
</evidence>
<evidence type="ECO:0000255" key="2">
    <source>
        <dbReference type="PROSITE-ProRule" id="PRU01066"/>
    </source>
</evidence>
<evidence type="ECO:0007744" key="3">
    <source>
    </source>
</evidence>
<evidence type="ECO:0007829" key="4">
    <source>
        <dbReference type="PDB" id="3HGB"/>
    </source>
</evidence>
<keyword id="KW-0002">3D-structure</keyword>
<keyword id="KW-0007">Acetylation</keyword>
<keyword id="KW-0450">Lipoyl</keyword>
<keyword id="KW-1185">Reference proteome</keyword>
<name>GCSH_MYCTU</name>
<proteinExistence type="evidence at protein level"/>
<sequence length="134" mass="14238">MSDIPSDLHYTAEHEWIRRSGDDTVRVGITDYAQSALGDVVFVQLPVIGTAVTAGETFGEVESTKSVSDLYAPISGKVSEVNSDLDGTPQLVNSDPYGAGWLLDIQVDSSDVAALESALTTLLDAEAYRGTLTE</sequence>
<organism>
    <name type="scientific">Mycobacterium tuberculosis (strain ATCC 25618 / H37Rv)</name>
    <dbReference type="NCBI Taxonomy" id="83332"/>
    <lineage>
        <taxon>Bacteria</taxon>
        <taxon>Bacillati</taxon>
        <taxon>Actinomycetota</taxon>
        <taxon>Actinomycetes</taxon>
        <taxon>Mycobacteriales</taxon>
        <taxon>Mycobacteriaceae</taxon>
        <taxon>Mycobacterium</taxon>
        <taxon>Mycobacterium tuberculosis complex</taxon>
    </lineage>
</organism>
<accession>P9WN55</accession>
<accession>L0T7T4</accession>
<accession>Q50607</accession>
<protein>
    <recommendedName>
        <fullName evidence="1">Glycine cleavage system H protein</fullName>
    </recommendedName>
</protein>
<dbReference type="EMBL" id="AL123456">
    <property type="protein sequence ID" value="CCP44592.1"/>
    <property type="molecule type" value="Genomic_DNA"/>
</dbReference>
<dbReference type="PIR" id="C70721">
    <property type="entry name" value="C70721"/>
</dbReference>
<dbReference type="RefSeq" id="NP_216342.1">
    <property type="nucleotide sequence ID" value="NC_000962.3"/>
</dbReference>
<dbReference type="RefSeq" id="WP_003899040.1">
    <property type="nucleotide sequence ID" value="NZ_NVQJ01000013.1"/>
</dbReference>
<dbReference type="PDB" id="3HGB">
    <property type="method" value="X-ray"/>
    <property type="resolution" value="1.75 A"/>
    <property type="chains" value="A=1-134"/>
</dbReference>
<dbReference type="PDB" id="3IFT">
    <property type="method" value="X-ray"/>
    <property type="resolution" value="2.00 A"/>
    <property type="chains" value="A=2-134"/>
</dbReference>
<dbReference type="PDB" id="5EXK">
    <property type="method" value="X-ray"/>
    <property type="resolution" value="1.86 A"/>
    <property type="chains" value="B/D/F/H/J/L=62-69"/>
</dbReference>
<dbReference type="PDBsum" id="3HGB"/>
<dbReference type="PDBsum" id="3IFT"/>
<dbReference type="PDBsum" id="5EXK"/>
<dbReference type="SMR" id="P9WN55"/>
<dbReference type="FunCoup" id="P9WN55">
    <property type="interactions" value="479"/>
</dbReference>
<dbReference type="STRING" id="83332.Rv1826"/>
<dbReference type="iPTMnet" id="P9WN55"/>
<dbReference type="PaxDb" id="83332-Rv1826"/>
<dbReference type="DNASU" id="885720"/>
<dbReference type="GeneID" id="885720"/>
<dbReference type="KEGG" id="mtu:Rv1826"/>
<dbReference type="KEGG" id="mtv:RVBD_1826"/>
<dbReference type="TubercuList" id="Rv1826"/>
<dbReference type="eggNOG" id="COG0509">
    <property type="taxonomic scope" value="Bacteria"/>
</dbReference>
<dbReference type="InParanoid" id="P9WN55"/>
<dbReference type="OrthoDB" id="9796712at2"/>
<dbReference type="PhylomeDB" id="P9WN55"/>
<dbReference type="EvolutionaryTrace" id="P9WN55"/>
<dbReference type="Proteomes" id="UP000001584">
    <property type="component" value="Chromosome"/>
</dbReference>
<dbReference type="GO" id="GO:0005829">
    <property type="term" value="C:cytosol"/>
    <property type="evidence" value="ECO:0000318"/>
    <property type="project" value="GO_Central"/>
</dbReference>
<dbReference type="GO" id="GO:0005960">
    <property type="term" value="C:glycine cleavage complex"/>
    <property type="evidence" value="ECO:0007669"/>
    <property type="project" value="InterPro"/>
</dbReference>
<dbReference type="GO" id="GO:0019464">
    <property type="term" value="P:glycine decarboxylation via glycine cleavage system"/>
    <property type="evidence" value="ECO:0007669"/>
    <property type="project" value="UniProtKB-UniRule"/>
</dbReference>
<dbReference type="CDD" id="cd06848">
    <property type="entry name" value="GCS_H"/>
    <property type="match status" value="1"/>
</dbReference>
<dbReference type="Gene3D" id="2.40.50.100">
    <property type="match status" value="1"/>
</dbReference>
<dbReference type="HAMAP" id="MF_00272">
    <property type="entry name" value="GcvH"/>
    <property type="match status" value="1"/>
</dbReference>
<dbReference type="InterPro" id="IPR003016">
    <property type="entry name" value="2-oxoA_DH_lipoyl-BS"/>
</dbReference>
<dbReference type="InterPro" id="IPR000089">
    <property type="entry name" value="Biotin_lipoyl"/>
</dbReference>
<dbReference type="InterPro" id="IPR002930">
    <property type="entry name" value="GCV_H"/>
</dbReference>
<dbReference type="InterPro" id="IPR033753">
    <property type="entry name" value="GCV_H/Fam206"/>
</dbReference>
<dbReference type="InterPro" id="IPR017453">
    <property type="entry name" value="GCV_H_sub"/>
</dbReference>
<dbReference type="InterPro" id="IPR011053">
    <property type="entry name" value="Single_hybrid_motif"/>
</dbReference>
<dbReference type="NCBIfam" id="TIGR00527">
    <property type="entry name" value="gcvH"/>
    <property type="match status" value="1"/>
</dbReference>
<dbReference type="NCBIfam" id="NF002270">
    <property type="entry name" value="PRK01202.1"/>
    <property type="match status" value="1"/>
</dbReference>
<dbReference type="PANTHER" id="PTHR11715">
    <property type="entry name" value="GLYCINE CLEAVAGE SYSTEM H PROTEIN"/>
    <property type="match status" value="1"/>
</dbReference>
<dbReference type="PANTHER" id="PTHR11715:SF3">
    <property type="entry name" value="GLYCINE CLEAVAGE SYSTEM H PROTEIN-RELATED"/>
    <property type="match status" value="1"/>
</dbReference>
<dbReference type="Pfam" id="PF01597">
    <property type="entry name" value="GCV_H"/>
    <property type="match status" value="1"/>
</dbReference>
<dbReference type="SUPFAM" id="SSF51230">
    <property type="entry name" value="Single hybrid motif"/>
    <property type="match status" value="1"/>
</dbReference>
<dbReference type="PROSITE" id="PS50968">
    <property type="entry name" value="BIOTINYL_LIPOYL"/>
    <property type="match status" value="1"/>
</dbReference>
<dbReference type="PROSITE" id="PS00189">
    <property type="entry name" value="LIPOYL"/>
    <property type="match status" value="1"/>
</dbReference>
<comment type="function">
    <text evidence="1">The glycine cleavage system catalyzes the degradation of glycine. The H protein shuttles the methylamine group of glycine from the P protein to the T protein.</text>
</comment>
<comment type="cofactor">
    <cofactor evidence="1">
        <name>(R)-lipoate</name>
        <dbReference type="ChEBI" id="CHEBI:83088"/>
    </cofactor>
    <text evidence="1">Binds 1 lipoyl cofactor covalently.</text>
</comment>
<comment type="subunit">
    <text evidence="1">The glycine cleavage system is composed of four proteins: P, T, L and H.</text>
</comment>
<comment type="similarity">
    <text evidence="1">Belongs to the GcvH family.</text>
</comment>
<feature type="initiator methionine" description="Removed" evidence="3">
    <location>
        <position position="1"/>
    </location>
</feature>
<feature type="chain" id="PRO_0000166228" description="Glycine cleavage system H protein">
    <location>
        <begin position="2"/>
        <end position="134"/>
    </location>
</feature>
<feature type="domain" description="Lipoyl-binding" evidence="2">
    <location>
        <begin position="24"/>
        <end position="106"/>
    </location>
</feature>
<feature type="modified residue" description="N-acetylserine" evidence="3">
    <location>
        <position position="2"/>
    </location>
</feature>
<feature type="modified residue" description="N6-lipoyllysine" evidence="1">
    <location>
        <position position="65"/>
    </location>
</feature>
<feature type="strand" evidence="4">
    <location>
        <begin position="14"/>
        <end position="21"/>
    </location>
</feature>
<feature type="strand" evidence="4">
    <location>
        <begin position="24"/>
        <end position="29"/>
    </location>
</feature>
<feature type="helix" evidence="4">
    <location>
        <begin position="31"/>
        <end position="37"/>
    </location>
</feature>
<feature type="strand" evidence="4">
    <location>
        <begin position="39"/>
        <end position="44"/>
    </location>
</feature>
<feature type="strand" evidence="4">
    <location>
        <begin position="57"/>
        <end position="65"/>
    </location>
</feature>
<feature type="strand" evidence="4">
    <location>
        <begin position="67"/>
        <end position="71"/>
    </location>
</feature>
<feature type="strand" evidence="4">
    <location>
        <begin position="73"/>
        <end position="81"/>
    </location>
</feature>
<feature type="helix" evidence="4">
    <location>
        <begin position="84"/>
        <end position="87"/>
    </location>
</feature>
<feature type="helix" evidence="4">
    <location>
        <begin position="91"/>
        <end position="94"/>
    </location>
</feature>
<feature type="turn" evidence="4">
    <location>
        <begin position="96"/>
        <end position="100"/>
    </location>
</feature>
<feature type="strand" evidence="4">
    <location>
        <begin position="103"/>
        <end position="106"/>
    </location>
</feature>
<feature type="turn" evidence="4">
    <location>
        <begin position="109"/>
        <end position="111"/>
    </location>
</feature>
<feature type="helix" evidence="4">
    <location>
        <begin position="115"/>
        <end position="119"/>
    </location>
</feature>
<feature type="helix" evidence="4">
    <location>
        <begin position="125"/>
        <end position="131"/>
    </location>
</feature>
<gene>
    <name evidence="1" type="primary">gcvH</name>
    <name type="ordered locus">Rv1826</name>
    <name type="ORF">MTCY1A11.17c</name>
</gene>